<comment type="function">
    <text evidence="1">Catalyzes the reversible phosphorylation of UMP to UDP.</text>
</comment>
<comment type="catalytic activity">
    <reaction evidence="1">
        <text>UMP + ATP = UDP + ADP</text>
        <dbReference type="Rhea" id="RHEA:24400"/>
        <dbReference type="ChEBI" id="CHEBI:30616"/>
        <dbReference type="ChEBI" id="CHEBI:57865"/>
        <dbReference type="ChEBI" id="CHEBI:58223"/>
        <dbReference type="ChEBI" id="CHEBI:456216"/>
        <dbReference type="EC" id="2.7.4.22"/>
    </reaction>
</comment>
<comment type="activity regulation">
    <text evidence="1">Inhibited by UTP.</text>
</comment>
<comment type="pathway">
    <text evidence="1">Pyrimidine metabolism; CTP biosynthesis via de novo pathway; UDP from UMP (UMPK route): step 1/1.</text>
</comment>
<comment type="subunit">
    <text evidence="1">Homohexamer.</text>
</comment>
<comment type="subcellular location">
    <subcellularLocation>
        <location evidence="1">Cytoplasm</location>
    </subcellularLocation>
</comment>
<comment type="similarity">
    <text evidence="1">Belongs to the UMP kinase family.</text>
</comment>
<evidence type="ECO:0000255" key="1">
    <source>
        <dbReference type="HAMAP-Rule" id="MF_01220"/>
    </source>
</evidence>
<keyword id="KW-0067">ATP-binding</keyword>
<keyword id="KW-0963">Cytoplasm</keyword>
<keyword id="KW-0418">Kinase</keyword>
<keyword id="KW-0547">Nucleotide-binding</keyword>
<keyword id="KW-0665">Pyrimidine biosynthesis</keyword>
<keyword id="KW-0808">Transferase</keyword>
<reference key="1">
    <citation type="journal article" date="2007" name="ISME J.">
        <title>Population level functional diversity in a microbial community revealed by comparative genomic and metagenomic analyses.</title>
        <authorList>
            <person name="Bhaya D."/>
            <person name="Grossman A.R."/>
            <person name="Steunou A.-S."/>
            <person name="Khuri N."/>
            <person name="Cohan F.M."/>
            <person name="Hamamura N."/>
            <person name="Melendrez M.C."/>
            <person name="Bateson M.M."/>
            <person name="Ward D.M."/>
            <person name="Heidelberg J.F."/>
        </authorList>
    </citation>
    <scope>NUCLEOTIDE SEQUENCE [LARGE SCALE GENOMIC DNA]</scope>
    <source>
        <strain>JA-3-3Ab</strain>
    </source>
</reference>
<sequence length="254" mass="27510">MKYRRILLKLSGEALMGERPYGIDPEVLQSIASEVASVVRAGVQVAIVVGGGNIWRGRKEAAAQGMDQASADYVGMLATVINALTLQDAIERAGIPTRVQTAIAMQEVAEPYIRRRAIRHLEKGRVVIFGAGSGNPFFTTDTTAALRAAEIDAEVIFKATKVDGVYDADPKTHPQARRYDVLSYQDVLTRDLRVMDSTAIALCKENQLPIVVFDLTTPGNIYRVVQGEPIGTWIGQTTPKSNGIPARLAQESGS</sequence>
<protein>
    <recommendedName>
        <fullName evidence="1">Uridylate kinase</fullName>
        <shortName evidence="1">UK</shortName>
        <ecNumber evidence="1">2.7.4.22</ecNumber>
    </recommendedName>
    <alternativeName>
        <fullName evidence="1">Uridine monophosphate kinase</fullName>
        <shortName evidence="1">UMP kinase</shortName>
        <shortName evidence="1">UMPK</shortName>
    </alternativeName>
</protein>
<feature type="chain" id="PRO_0000323967" description="Uridylate kinase">
    <location>
        <begin position="1"/>
        <end position="254"/>
    </location>
</feature>
<feature type="binding site" evidence="1">
    <location>
        <begin position="9"/>
        <end position="12"/>
    </location>
    <ligand>
        <name>ATP</name>
        <dbReference type="ChEBI" id="CHEBI:30616"/>
    </ligand>
</feature>
<feature type="binding site" evidence="1">
    <location>
        <position position="51"/>
    </location>
    <ligand>
        <name>UMP</name>
        <dbReference type="ChEBI" id="CHEBI:57865"/>
    </ligand>
</feature>
<feature type="binding site" evidence="1">
    <location>
        <position position="52"/>
    </location>
    <ligand>
        <name>ATP</name>
        <dbReference type="ChEBI" id="CHEBI:30616"/>
    </ligand>
</feature>
<feature type="binding site" evidence="1">
    <location>
        <position position="56"/>
    </location>
    <ligand>
        <name>ATP</name>
        <dbReference type="ChEBI" id="CHEBI:30616"/>
    </ligand>
</feature>
<feature type="binding site" evidence="1">
    <location>
        <position position="72"/>
    </location>
    <ligand>
        <name>UMP</name>
        <dbReference type="ChEBI" id="CHEBI:57865"/>
    </ligand>
</feature>
<feature type="binding site" evidence="1">
    <location>
        <begin position="133"/>
        <end position="140"/>
    </location>
    <ligand>
        <name>UMP</name>
        <dbReference type="ChEBI" id="CHEBI:57865"/>
    </ligand>
</feature>
<feature type="binding site" evidence="1">
    <location>
        <position position="160"/>
    </location>
    <ligand>
        <name>ATP</name>
        <dbReference type="ChEBI" id="CHEBI:30616"/>
    </ligand>
</feature>
<feature type="binding site" evidence="1">
    <location>
        <position position="166"/>
    </location>
    <ligand>
        <name>ATP</name>
        <dbReference type="ChEBI" id="CHEBI:30616"/>
    </ligand>
</feature>
<feature type="binding site" evidence="1">
    <location>
        <position position="169"/>
    </location>
    <ligand>
        <name>ATP</name>
        <dbReference type="ChEBI" id="CHEBI:30616"/>
    </ligand>
</feature>
<gene>
    <name evidence="1" type="primary">pyrH</name>
    <name type="ordered locus">CYA_2421</name>
</gene>
<name>PYRH_SYNJA</name>
<dbReference type="EC" id="2.7.4.22" evidence="1"/>
<dbReference type="EMBL" id="CP000239">
    <property type="protein sequence ID" value="ABD00544.1"/>
    <property type="molecule type" value="Genomic_DNA"/>
</dbReference>
<dbReference type="RefSeq" id="WP_011431217.1">
    <property type="nucleotide sequence ID" value="NC_007775.1"/>
</dbReference>
<dbReference type="SMR" id="Q2JS42"/>
<dbReference type="STRING" id="321327.CYA_2421"/>
<dbReference type="KEGG" id="cya:CYA_2421"/>
<dbReference type="eggNOG" id="COG0528">
    <property type="taxonomic scope" value="Bacteria"/>
</dbReference>
<dbReference type="HOGENOM" id="CLU_033861_0_0_3"/>
<dbReference type="UniPathway" id="UPA00159">
    <property type="reaction ID" value="UER00275"/>
</dbReference>
<dbReference type="Proteomes" id="UP000008818">
    <property type="component" value="Chromosome"/>
</dbReference>
<dbReference type="GO" id="GO:0005737">
    <property type="term" value="C:cytoplasm"/>
    <property type="evidence" value="ECO:0007669"/>
    <property type="project" value="UniProtKB-SubCell"/>
</dbReference>
<dbReference type="GO" id="GO:0005524">
    <property type="term" value="F:ATP binding"/>
    <property type="evidence" value="ECO:0007669"/>
    <property type="project" value="UniProtKB-KW"/>
</dbReference>
<dbReference type="GO" id="GO:0033862">
    <property type="term" value="F:UMP kinase activity"/>
    <property type="evidence" value="ECO:0007669"/>
    <property type="project" value="UniProtKB-EC"/>
</dbReference>
<dbReference type="GO" id="GO:0044210">
    <property type="term" value="P:'de novo' CTP biosynthetic process"/>
    <property type="evidence" value="ECO:0007669"/>
    <property type="project" value="UniProtKB-UniRule"/>
</dbReference>
<dbReference type="GO" id="GO:0006225">
    <property type="term" value="P:UDP biosynthetic process"/>
    <property type="evidence" value="ECO:0007669"/>
    <property type="project" value="TreeGrafter"/>
</dbReference>
<dbReference type="CDD" id="cd04254">
    <property type="entry name" value="AAK_UMPK-PyrH-Ec"/>
    <property type="match status" value="1"/>
</dbReference>
<dbReference type="FunFam" id="3.40.1160.10:FF:000001">
    <property type="entry name" value="Uridylate kinase"/>
    <property type="match status" value="1"/>
</dbReference>
<dbReference type="Gene3D" id="3.40.1160.10">
    <property type="entry name" value="Acetylglutamate kinase-like"/>
    <property type="match status" value="1"/>
</dbReference>
<dbReference type="HAMAP" id="MF_01220_B">
    <property type="entry name" value="PyrH_B"/>
    <property type="match status" value="1"/>
</dbReference>
<dbReference type="InterPro" id="IPR036393">
    <property type="entry name" value="AceGlu_kinase-like_sf"/>
</dbReference>
<dbReference type="InterPro" id="IPR001048">
    <property type="entry name" value="Asp/Glu/Uridylate_kinase"/>
</dbReference>
<dbReference type="InterPro" id="IPR011817">
    <property type="entry name" value="Uridylate_kinase"/>
</dbReference>
<dbReference type="InterPro" id="IPR015963">
    <property type="entry name" value="Uridylate_kinase_bac"/>
</dbReference>
<dbReference type="NCBIfam" id="TIGR02075">
    <property type="entry name" value="pyrH_bact"/>
    <property type="match status" value="1"/>
</dbReference>
<dbReference type="PANTHER" id="PTHR42833">
    <property type="entry name" value="URIDYLATE KINASE"/>
    <property type="match status" value="1"/>
</dbReference>
<dbReference type="PANTHER" id="PTHR42833:SF4">
    <property type="entry name" value="URIDYLATE KINASE PUMPKIN, CHLOROPLASTIC"/>
    <property type="match status" value="1"/>
</dbReference>
<dbReference type="Pfam" id="PF00696">
    <property type="entry name" value="AA_kinase"/>
    <property type="match status" value="1"/>
</dbReference>
<dbReference type="PIRSF" id="PIRSF005650">
    <property type="entry name" value="Uridylate_kin"/>
    <property type="match status" value="1"/>
</dbReference>
<dbReference type="SUPFAM" id="SSF53633">
    <property type="entry name" value="Carbamate kinase-like"/>
    <property type="match status" value="1"/>
</dbReference>
<organism>
    <name type="scientific">Synechococcus sp. (strain JA-3-3Ab)</name>
    <name type="common">Cyanobacteria bacterium Yellowstone A-Prime</name>
    <dbReference type="NCBI Taxonomy" id="321327"/>
    <lineage>
        <taxon>Bacteria</taxon>
        <taxon>Bacillati</taxon>
        <taxon>Cyanobacteriota</taxon>
        <taxon>Cyanophyceae</taxon>
        <taxon>Synechococcales</taxon>
        <taxon>Synechococcaceae</taxon>
        <taxon>Synechococcus</taxon>
    </lineage>
</organism>
<accession>Q2JS42</accession>
<proteinExistence type="inferred from homology"/>